<evidence type="ECO:0000255" key="1">
    <source>
        <dbReference type="HAMAP-Rule" id="MF_03168"/>
    </source>
</evidence>
<dbReference type="EC" id="2.7.4.3" evidence="1"/>
<dbReference type="EMBL" id="CH981530">
    <property type="protein sequence ID" value="EDK46606.1"/>
    <property type="molecule type" value="Genomic_DNA"/>
</dbReference>
<dbReference type="RefSeq" id="XP_001523974.1">
    <property type="nucleotide sequence ID" value="XM_001523924.1"/>
</dbReference>
<dbReference type="SMR" id="A5E598"/>
<dbReference type="FunCoup" id="A5E598">
    <property type="interactions" value="799"/>
</dbReference>
<dbReference type="STRING" id="379508.A5E598"/>
<dbReference type="GeneID" id="5230965"/>
<dbReference type="KEGG" id="lel:PVL30_005521"/>
<dbReference type="VEuPathDB" id="FungiDB:LELG_04787"/>
<dbReference type="eggNOG" id="KOG3078">
    <property type="taxonomic scope" value="Eukaryota"/>
</dbReference>
<dbReference type="HOGENOM" id="CLU_032354_1_0_1"/>
<dbReference type="InParanoid" id="A5E598"/>
<dbReference type="OMA" id="VYHEQTA"/>
<dbReference type="OrthoDB" id="439792at2759"/>
<dbReference type="Proteomes" id="UP000001996">
    <property type="component" value="Unassembled WGS sequence"/>
</dbReference>
<dbReference type="GO" id="GO:0005829">
    <property type="term" value="C:cytosol"/>
    <property type="evidence" value="ECO:0007669"/>
    <property type="project" value="UniProtKB-SubCell"/>
</dbReference>
<dbReference type="GO" id="GO:0005758">
    <property type="term" value="C:mitochondrial intermembrane space"/>
    <property type="evidence" value="ECO:0007669"/>
    <property type="project" value="UniProtKB-SubCell"/>
</dbReference>
<dbReference type="GO" id="GO:0004017">
    <property type="term" value="F:adenylate kinase activity"/>
    <property type="evidence" value="ECO:0007669"/>
    <property type="project" value="UniProtKB-UniRule"/>
</dbReference>
<dbReference type="GO" id="GO:0016208">
    <property type="term" value="F:AMP binding"/>
    <property type="evidence" value="ECO:0007669"/>
    <property type="project" value="EnsemblFungi"/>
</dbReference>
<dbReference type="GO" id="GO:0005524">
    <property type="term" value="F:ATP binding"/>
    <property type="evidence" value="ECO:0007669"/>
    <property type="project" value="UniProtKB-KW"/>
</dbReference>
<dbReference type="GO" id="GO:0003688">
    <property type="term" value="F:DNA replication origin binding"/>
    <property type="evidence" value="ECO:0007669"/>
    <property type="project" value="EnsemblFungi"/>
</dbReference>
<dbReference type="GO" id="GO:0006172">
    <property type="term" value="P:ADP biosynthetic process"/>
    <property type="evidence" value="ECO:0007669"/>
    <property type="project" value="UniProtKB-UniRule"/>
</dbReference>
<dbReference type="GO" id="GO:0046033">
    <property type="term" value="P:AMP metabolic process"/>
    <property type="evidence" value="ECO:0007669"/>
    <property type="project" value="UniProtKB-UniRule"/>
</dbReference>
<dbReference type="GO" id="GO:0046034">
    <property type="term" value="P:ATP metabolic process"/>
    <property type="evidence" value="ECO:0007669"/>
    <property type="project" value="UniProtKB-UniRule"/>
</dbReference>
<dbReference type="GO" id="GO:0006270">
    <property type="term" value="P:DNA replication initiation"/>
    <property type="evidence" value="ECO:0007669"/>
    <property type="project" value="EnsemblFungi"/>
</dbReference>
<dbReference type="GO" id="GO:0036388">
    <property type="term" value="P:pre-replicative complex assembly"/>
    <property type="evidence" value="ECO:0007669"/>
    <property type="project" value="EnsemblFungi"/>
</dbReference>
<dbReference type="CDD" id="cd01428">
    <property type="entry name" value="ADK"/>
    <property type="match status" value="1"/>
</dbReference>
<dbReference type="FunFam" id="3.40.50.300:FF:000106">
    <property type="entry name" value="Adenylate kinase mitochondrial"/>
    <property type="match status" value="1"/>
</dbReference>
<dbReference type="Gene3D" id="3.40.50.300">
    <property type="entry name" value="P-loop containing nucleotide triphosphate hydrolases"/>
    <property type="match status" value="1"/>
</dbReference>
<dbReference type="HAMAP" id="MF_00235">
    <property type="entry name" value="Adenylate_kinase_Adk"/>
    <property type="match status" value="1"/>
</dbReference>
<dbReference type="HAMAP" id="MF_03168">
    <property type="entry name" value="Adenylate_kinase_AK2"/>
    <property type="match status" value="1"/>
</dbReference>
<dbReference type="InterPro" id="IPR006259">
    <property type="entry name" value="Adenyl_kin_sub"/>
</dbReference>
<dbReference type="InterPro" id="IPR000850">
    <property type="entry name" value="Adenylat/UMP-CMP_kin"/>
</dbReference>
<dbReference type="InterPro" id="IPR033690">
    <property type="entry name" value="Adenylat_kinase_CS"/>
</dbReference>
<dbReference type="InterPro" id="IPR007862">
    <property type="entry name" value="Adenylate_kinase_lid-dom"/>
</dbReference>
<dbReference type="InterPro" id="IPR028587">
    <property type="entry name" value="AK2"/>
</dbReference>
<dbReference type="InterPro" id="IPR027417">
    <property type="entry name" value="P-loop_NTPase"/>
</dbReference>
<dbReference type="NCBIfam" id="TIGR01351">
    <property type="entry name" value="adk"/>
    <property type="match status" value="1"/>
</dbReference>
<dbReference type="NCBIfam" id="NF001380">
    <property type="entry name" value="PRK00279.1-2"/>
    <property type="match status" value="1"/>
</dbReference>
<dbReference type="NCBIfam" id="NF001381">
    <property type="entry name" value="PRK00279.1-3"/>
    <property type="match status" value="1"/>
</dbReference>
<dbReference type="NCBIfam" id="NF011100">
    <property type="entry name" value="PRK14527.1"/>
    <property type="match status" value="1"/>
</dbReference>
<dbReference type="PANTHER" id="PTHR23359">
    <property type="entry name" value="NUCLEOTIDE KINASE"/>
    <property type="match status" value="1"/>
</dbReference>
<dbReference type="Pfam" id="PF00406">
    <property type="entry name" value="ADK"/>
    <property type="match status" value="1"/>
</dbReference>
<dbReference type="Pfam" id="PF05191">
    <property type="entry name" value="ADK_lid"/>
    <property type="match status" value="1"/>
</dbReference>
<dbReference type="PRINTS" id="PR00094">
    <property type="entry name" value="ADENYLTKNASE"/>
</dbReference>
<dbReference type="SUPFAM" id="SSF52540">
    <property type="entry name" value="P-loop containing nucleoside triphosphate hydrolases"/>
    <property type="match status" value="1"/>
</dbReference>
<dbReference type="PROSITE" id="PS00113">
    <property type="entry name" value="ADENYLATE_KINASE"/>
    <property type="match status" value="1"/>
</dbReference>
<protein>
    <recommendedName>
        <fullName evidence="1">Adenylate kinase</fullName>
        <ecNumber evidence="1">2.7.4.3</ecNumber>
    </recommendedName>
    <alternativeName>
        <fullName evidence="1">ATP-AMP transphosphorylase</fullName>
    </alternativeName>
    <alternativeName>
        <fullName evidence="1">ATP:AMP phosphotransferase</fullName>
    </alternativeName>
    <alternativeName>
        <fullName evidence="1">Adenylate kinase cytosolic and mitochondrial</fullName>
    </alternativeName>
    <alternativeName>
        <fullName evidence="1">Adenylate monophosphate kinase</fullName>
    </alternativeName>
</protein>
<gene>
    <name evidence="1" type="primary">ADK1</name>
    <name type="ORF">LELG_04787</name>
</gene>
<feature type="chain" id="PRO_0000365677" description="Adenylate kinase">
    <location>
        <begin position="1"/>
        <end position="252"/>
    </location>
</feature>
<feature type="region of interest" description="NMP" evidence="1">
    <location>
        <begin position="67"/>
        <end position="96"/>
    </location>
</feature>
<feature type="region of interest" description="LID" evidence="1">
    <location>
        <begin position="164"/>
        <end position="201"/>
    </location>
</feature>
<feature type="binding site" evidence="1">
    <location>
        <begin position="47"/>
        <end position="52"/>
    </location>
    <ligand>
        <name>ATP</name>
        <dbReference type="ChEBI" id="CHEBI:30616"/>
    </ligand>
</feature>
<feature type="binding site" evidence="1">
    <location>
        <position position="68"/>
    </location>
    <ligand>
        <name>AMP</name>
        <dbReference type="ChEBI" id="CHEBI:456215"/>
    </ligand>
</feature>
<feature type="binding site" evidence="1">
    <location>
        <position position="73"/>
    </location>
    <ligand>
        <name>AMP</name>
        <dbReference type="ChEBI" id="CHEBI:456215"/>
    </ligand>
</feature>
<feature type="binding site" evidence="1">
    <location>
        <begin position="94"/>
        <end position="96"/>
    </location>
    <ligand>
        <name>AMP</name>
        <dbReference type="ChEBI" id="CHEBI:456215"/>
    </ligand>
</feature>
<feature type="binding site" evidence="1">
    <location>
        <begin position="123"/>
        <end position="126"/>
    </location>
    <ligand>
        <name>AMP</name>
        <dbReference type="ChEBI" id="CHEBI:456215"/>
    </ligand>
</feature>
<feature type="binding site" evidence="1">
    <location>
        <position position="130"/>
    </location>
    <ligand>
        <name>AMP</name>
        <dbReference type="ChEBI" id="CHEBI:456215"/>
    </ligand>
</feature>
<feature type="binding site" evidence="1">
    <location>
        <position position="165"/>
    </location>
    <ligand>
        <name>ATP</name>
        <dbReference type="ChEBI" id="CHEBI:30616"/>
    </ligand>
</feature>
<feature type="binding site" evidence="1">
    <location>
        <begin position="174"/>
        <end position="175"/>
    </location>
    <ligand>
        <name>ATP</name>
        <dbReference type="ChEBI" id="CHEBI:30616"/>
    </ligand>
</feature>
<feature type="binding site" evidence="1">
    <location>
        <position position="198"/>
    </location>
    <ligand>
        <name>AMP</name>
        <dbReference type="ChEBI" id="CHEBI:456215"/>
    </ligand>
</feature>
<feature type="binding site" evidence="1">
    <location>
        <position position="209"/>
    </location>
    <ligand>
        <name>AMP</name>
        <dbReference type="ChEBI" id="CHEBI:456215"/>
    </ligand>
</feature>
<feature type="binding site" evidence="1">
    <location>
        <position position="237"/>
    </location>
    <ligand>
        <name>ATP</name>
        <dbReference type="ChEBI" id="CHEBI:30616"/>
    </ligand>
</feature>
<name>KAD2_LODEL</name>
<accession>A5E598</accession>
<sequence length="252" mass="28214">MSVEELKDTVHKLHERIQQLEKKVGVLPSSQPDFAKQLRLVLIGAPGSGKGTQSTDLKDKFCACHLATGDMLRSQVKQGTPLGLEAKKIMDQGGLVNDEIMIGMIKQELETNQDCKKGFILDGFPRTIPQAEKLDSMLKDRKTPLENAIELKIDDELLVDRITGRLVHPASGRSYHKIFSPPKKEMTDDITGEPLVQRSDDNEAALKKRLVTYHAQTEPIVEYYKKTGIWQGIDASQKPAKVWKDILKCLGQ</sequence>
<reference key="1">
    <citation type="journal article" date="2009" name="Nature">
        <title>Evolution of pathogenicity and sexual reproduction in eight Candida genomes.</title>
        <authorList>
            <person name="Butler G."/>
            <person name="Rasmussen M.D."/>
            <person name="Lin M.F."/>
            <person name="Santos M.A.S."/>
            <person name="Sakthikumar S."/>
            <person name="Munro C.A."/>
            <person name="Rheinbay E."/>
            <person name="Grabherr M."/>
            <person name="Forche A."/>
            <person name="Reedy J.L."/>
            <person name="Agrafioti I."/>
            <person name="Arnaud M.B."/>
            <person name="Bates S."/>
            <person name="Brown A.J.P."/>
            <person name="Brunke S."/>
            <person name="Costanzo M.C."/>
            <person name="Fitzpatrick D.A."/>
            <person name="de Groot P.W.J."/>
            <person name="Harris D."/>
            <person name="Hoyer L.L."/>
            <person name="Hube B."/>
            <person name="Klis F.M."/>
            <person name="Kodira C."/>
            <person name="Lennard N."/>
            <person name="Logue M.E."/>
            <person name="Martin R."/>
            <person name="Neiman A.M."/>
            <person name="Nikolaou E."/>
            <person name="Quail M.A."/>
            <person name="Quinn J."/>
            <person name="Santos M.C."/>
            <person name="Schmitzberger F.F."/>
            <person name="Sherlock G."/>
            <person name="Shah P."/>
            <person name="Silverstein K.A.T."/>
            <person name="Skrzypek M.S."/>
            <person name="Soll D."/>
            <person name="Staggs R."/>
            <person name="Stansfield I."/>
            <person name="Stumpf M.P.H."/>
            <person name="Sudbery P.E."/>
            <person name="Srikantha T."/>
            <person name="Zeng Q."/>
            <person name="Berman J."/>
            <person name="Berriman M."/>
            <person name="Heitman J."/>
            <person name="Gow N.A.R."/>
            <person name="Lorenz M.C."/>
            <person name="Birren B.W."/>
            <person name="Kellis M."/>
            <person name="Cuomo C.A."/>
        </authorList>
    </citation>
    <scope>NUCLEOTIDE SEQUENCE [LARGE SCALE GENOMIC DNA]</scope>
    <source>
        <strain>ATCC 11503 / BCRC 21390 / CBS 2605 / JCM 1781 / NBRC 1676 / NRRL YB-4239</strain>
    </source>
</reference>
<proteinExistence type="inferred from homology"/>
<organism>
    <name type="scientific">Lodderomyces elongisporus (strain ATCC 11503 / CBS 2605 / JCM 1781 / NBRC 1676 / NRRL YB-4239)</name>
    <name type="common">Yeast</name>
    <name type="synonym">Saccharomyces elongisporus</name>
    <dbReference type="NCBI Taxonomy" id="379508"/>
    <lineage>
        <taxon>Eukaryota</taxon>
        <taxon>Fungi</taxon>
        <taxon>Dikarya</taxon>
        <taxon>Ascomycota</taxon>
        <taxon>Saccharomycotina</taxon>
        <taxon>Pichiomycetes</taxon>
        <taxon>Debaryomycetaceae</taxon>
        <taxon>Candida/Lodderomyces clade</taxon>
        <taxon>Lodderomyces</taxon>
    </lineage>
</organism>
<comment type="function">
    <text evidence="1">Catalyzes the reversible transfer of the terminal phosphate group between ATP and AMP. Plays an important role in cellular energy homeostasis and in adenine nucleotide metabolism. Adenylate kinase activity is critical for regulation of the phosphate utilization and the AMP de novo biosynthesis pathways.</text>
</comment>
<comment type="catalytic activity">
    <reaction evidence="1">
        <text>AMP + ATP = 2 ADP</text>
        <dbReference type="Rhea" id="RHEA:12973"/>
        <dbReference type="ChEBI" id="CHEBI:30616"/>
        <dbReference type="ChEBI" id="CHEBI:456215"/>
        <dbReference type="ChEBI" id="CHEBI:456216"/>
        <dbReference type="EC" id="2.7.4.3"/>
    </reaction>
</comment>
<comment type="subunit">
    <text evidence="1">Monomer.</text>
</comment>
<comment type="subcellular location">
    <subcellularLocation>
        <location evidence="1">Cytoplasm</location>
        <location evidence="1">Cytosol</location>
    </subcellularLocation>
    <subcellularLocation>
        <location evidence="1">Mitochondrion intermembrane space</location>
    </subcellularLocation>
    <text evidence="1">Predominantly mitochondrial.</text>
</comment>
<comment type="domain">
    <text evidence="1">Consists of three domains, a large central CORE domain and two small peripheral domains, NMPbind and LID, which undergo movements during catalysis. The LID domain closes over the site of phosphoryl transfer upon ATP binding. Assembling and dissambling the active center during each catalytic cycle provides an effective means to prevent ATP hydrolysis.</text>
</comment>
<comment type="similarity">
    <text evidence="1">Belongs to the adenylate kinase family. AK2 subfamily.</text>
</comment>
<keyword id="KW-0067">ATP-binding</keyword>
<keyword id="KW-0963">Cytoplasm</keyword>
<keyword id="KW-0418">Kinase</keyword>
<keyword id="KW-0496">Mitochondrion</keyword>
<keyword id="KW-0547">Nucleotide-binding</keyword>
<keyword id="KW-1185">Reference proteome</keyword>
<keyword id="KW-0808">Transferase</keyword>